<feature type="chain" id="PRO_0000052845" description="Hemoglobin subunit theta-1">
    <location>
        <begin position="1"/>
        <end position="142"/>
    </location>
</feature>
<feature type="domain" description="Globin" evidence="1">
    <location>
        <begin position="2"/>
        <end position="142"/>
    </location>
</feature>
<feature type="binding site" description="distal binding residue">
    <location>
        <position position="59"/>
    </location>
    <ligand>
        <name>heme b</name>
        <dbReference type="ChEBI" id="CHEBI:60344"/>
    </ligand>
    <ligandPart>
        <name>Fe</name>
        <dbReference type="ChEBI" id="CHEBI:18248"/>
    </ligandPart>
</feature>
<feature type="binding site" description="proximal binding residue">
    <location>
        <position position="88"/>
    </location>
    <ligand>
        <name>heme b</name>
        <dbReference type="ChEBI" id="CHEBI:60344"/>
    </ligand>
    <ligandPart>
        <name>Fe</name>
        <dbReference type="ChEBI" id="CHEBI:18248"/>
    </ligandPart>
</feature>
<gene>
    <name type="primary">HBQ1</name>
    <name type="synonym">PSI ALPHA</name>
    <name type="synonym">THETA1</name>
</gene>
<evidence type="ECO:0000255" key="1">
    <source>
        <dbReference type="PROSITE-ProRule" id="PRU00238"/>
    </source>
</evidence>
<protein>
    <recommendedName>
        <fullName>Hemoglobin subunit theta-1</fullName>
    </recommendedName>
    <alternativeName>
        <fullName>Hemoglobin theta-1 chain</fullName>
    </alternativeName>
    <alternativeName>
        <fullName>Theta-1-globin</fullName>
    </alternativeName>
</protein>
<dbReference type="EMBL" id="Y00284">
    <property type="protein sequence ID" value="CAA68394.1"/>
    <property type="molecule type" value="Genomic_DNA"/>
</dbReference>
<dbReference type="PIR" id="S07342">
    <property type="entry name" value="S07342"/>
</dbReference>
<dbReference type="SMR" id="P06714"/>
<dbReference type="FunCoup" id="P06714">
    <property type="interactions" value="8"/>
</dbReference>
<dbReference type="STRING" id="9796.ENSECAP00000041983"/>
<dbReference type="PaxDb" id="9796-ENSECAP00000041983"/>
<dbReference type="InParanoid" id="P06714"/>
<dbReference type="Proteomes" id="UP000002281">
    <property type="component" value="Unplaced"/>
</dbReference>
<dbReference type="GO" id="GO:0031838">
    <property type="term" value="C:haptoglobin-hemoglobin complex"/>
    <property type="evidence" value="ECO:0000318"/>
    <property type="project" value="GO_Central"/>
</dbReference>
<dbReference type="GO" id="GO:0005833">
    <property type="term" value="C:hemoglobin complex"/>
    <property type="evidence" value="ECO:0000318"/>
    <property type="project" value="GO_Central"/>
</dbReference>
<dbReference type="GO" id="GO:0020037">
    <property type="term" value="F:heme binding"/>
    <property type="evidence" value="ECO:0000318"/>
    <property type="project" value="GO_Central"/>
</dbReference>
<dbReference type="GO" id="GO:0005506">
    <property type="term" value="F:iron ion binding"/>
    <property type="evidence" value="ECO:0007669"/>
    <property type="project" value="InterPro"/>
</dbReference>
<dbReference type="GO" id="GO:0019825">
    <property type="term" value="F:oxygen binding"/>
    <property type="evidence" value="ECO:0000318"/>
    <property type="project" value="GO_Central"/>
</dbReference>
<dbReference type="GO" id="GO:0005344">
    <property type="term" value="F:oxygen carrier activity"/>
    <property type="evidence" value="ECO:0000318"/>
    <property type="project" value="GO_Central"/>
</dbReference>
<dbReference type="GO" id="GO:0098869">
    <property type="term" value="P:cellular oxidant detoxification"/>
    <property type="evidence" value="ECO:0007669"/>
    <property type="project" value="GOC"/>
</dbReference>
<dbReference type="GO" id="GO:0042744">
    <property type="term" value="P:hydrogen peroxide catabolic process"/>
    <property type="evidence" value="ECO:0000318"/>
    <property type="project" value="GO_Central"/>
</dbReference>
<dbReference type="FunFam" id="1.10.490.10:FF:000002">
    <property type="entry name" value="Hemoglobin subunit alpha"/>
    <property type="match status" value="1"/>
</dbReference>
<dbReference type="Gene3D" id="1.10.490.10">
    <property type="entry name" value="Globins"/>
    <property type="match status" value="1"/>
</dbReference>
<dbReference type="InterPro" id="IPR000971">
    <property type="entry name" value="Globin"/>
</dbReference>
<dbReference type="InterPro" id="IPR009050">
    <property type="entry name" value="Globin-like_sf"/>
</dbReference>
<dbReference type="InterPro" id="IPR012292">
    <property type="entry name" value="Globin/Proto"/>
</dbReference>
<dbReference type="InterPro" id="IPR002338">
    <property type="entry name" value="Hemoglobin_a-typ"/>
</dbReference>
<dbReference type="InterPro" id="IPR050056">
    <property type="entry name" value="Hemoglobin_oxygen_transport"/>
</dbReference>
<dbReference type="InterPro" id="IPR002339">
    <property type="entry name" value="Hemoglobin_pi"/>
</dbReference>
<dbReference type="PANTHER" id="PTHR11442">
    <property type="entry name" value="HEMOGLOBIN FAMILY MEMBER"/>
    <property type="match status" value="1"/>
</dbReference>
<dbReference type="PANTHER" id="PTHR11442:SF15">
    <property type="entry name" value="HEMOGLOBIN SUBUNIT THETA-1"/>
    <property type="match status" value="1"/>
</dbReference>
<dbReference type="Pfam" id="PF00042">
    <property type="entry name" value="Globin"/>
    <property type="match status" value="1"/>
</dbReference>
<dbReference type="PRINTS" id="PR00612">
    <property type="entry name" value="ALPHAHAEM"/>
</dbReference>
<dbReference type="PRINTS" id="PR00815">
    <property type="entry name" value="PIHAEM"/>
</dbReference>
<dbReference type="SUPFAM" id="SSF46458">
    <property type="entry name" value="Globin-like"/>
    <property type="match status" value="1"/>
</dbReference>
<dbReference type="PROSITE" id="PS01033">
    <property type="entry name" value="GLOBIN"/>
    <property type="match status" value="1"/>
</dbReference>
<sequence>MALAAADRATVRALWKKMGSNVGVYATEALERMFLGFPSTTTYFLHLDLSLGSTQVKAHGQKVADALTLAVEHLEDLPRALSALRHRHVRELRVDPASFQLLGHCLLVTPARHFPGDFSPTLHASLVKFLSHVISALASDCR</sequence>
<keyword id="KW-0349">Heme</keyword>
<keyword id="KW-0408">Iron</keyword>
<keyword id="KW-0479">Metal-binding</keyword>
<keyword id="KW-0561">Oxygen transport</keyword>
<keyword id="KW-1185">Reference proteome</keyword>
<keyword id="KW-0813">Transport</keyword>
<name>HBAT_HORSE</name>
<comment type="similarity">
    <text evidence="1">Belongs to the globin family.</text>
</comment>
<organism>
    <name type="scientific">Equus caballus</name>
    <name type="common">Horse</name>
    <dbReference type="NCBI Taxonomy" id="9796"/>
    <lineage>
        <taxon>Eukaryota</taxon>
        <taxon>Metazoa</taxon>
        <taxon>Chordata</taxon>
        <taxon>Craniata</taxon>
        <taxon>Vertebrata</taxon>
        <taxon>Euteleostomi</taxon>
        <taxon>Mammalia</taxon>
        <taxon>Eutheria</taxon>
        <taxon>Laurasiatheria</taxon>
        <taxon>Perissodactyla</taxon>
        <taxon>Equidae</taxon>
        <taxon>Equus</taxon>
    </lineage>
</organism>
<reference key="1">
    <citation type="journal article" date="1987" name="Nature">
        <title>Can the product of the theta gene be a real globin?</title>
        <authorList>
            <person name="Clegg J.B."/>
        </authorList>
    </citation>
    <scope>NUCLEOTIDE SEQUENCE [GENOMIC DNA]</scope>
</reference>
<proteinExistence type="inferred from homology"/>
<accession>P06714</accession>